<name>CLPS_ECO5E</name>
<evidence type="ECO:0000255" key="1">
    <source>
        <dbReference type="HAMAP-Rule" id="MF_00302"/>
    </source>
</evidence>
<accession>B5YSH7</accession>
<reference key="1">
    <citation type="journal article" date="2011" name="Proc. Natl. Acad. Sci. U.S.A.">
        <title>Genomic anatomy of Escherichia coli O157:H7 outbreaks.</title>
        <authorList>
            <person name="Eppinger M."/>
            <person name="Mammel M.K."/>
            <person name="Leclerc J.E."/>
            <person name="Ravel J."/>
            <person name="Cebula T.A."/>
        </authorList>
    </citation>
    <scope>NUCLEOTIDE SEQUENCE [LARGE SCALE GENOMIC DNA]</scope>
    <source>
        <strain>EC4115 / EHEC</strain>
    </source>
</reference>
<organism>
    <name type="scientific">Escherichia coli O157:H7 (strain EC4115 / EHEC)</name>
    <dbReference type="NCBI Taxonomy" id="444450"/>
    <lineage>
        <taxon>Bacteria</taxon>
        <taxon>Pseudomonadati</taxon>
        <taxon>Pseudomonadota</taxon>
        <taxon>Gammaproteobacteria</taxon>
        <taxon>Enterobacterales</taxon>
        <taxon>Enterobacteriaceae</taxon>
        <taxon>Escherichia</taxon>
    </lineage>
</organism>
<comment type="function">
    <text evidence="1">Involved in the modulation of the specificity of the ClpAP-mediated ATP-dependent protein degradation.</text>
</comment>
<comment type="subunit">
    <text evidence="1">Binds to the N-terminal domain of the chaperone ClpA.</text>
</comment>
<comment type="similarity">
    <text evidence="1">Belongs to the ClpS family.</text>
</comment>
<dbReference type="EMBL" id="CP001164">
    <property type="protein sequence ID" value="ACI38336.1"/>
    <property type="molecule type" value="Genomic_DNA"/>
</dbReference>
<dbReference type="RefSeq" id="WP_000520781.1">
    <property type="nucleotide sequence ID" value="NC_011353.1"/>
</dbReference>
<dbReference type="SMR" id="B5YSH7"/>
<dbReference type="GeneID" id="86863397"/>
<dbReference type="KEGG" id="ecf:ECH74115_1042"/>
<dbReference type="HOGENOM" id="CLU_134358_2_1_6"/>
<dbReference type="GO" id="GO:0030163">
    <property type="term" value="P:protein catabolic process"/>
    <property type="evidence" value="ECO:0007669"/>
    <property type="project" value="InterPro"/>
</dbReference>
<dbReference type="GO" id="GO:0006508">
    <property type="term" value="P:proteolysis"/>
    <property type="evidence" value="ECO:0007669"/>
    <property type="project" value="UniProtKB-UniRule"/>
</dbReference>
<dbReference type="FunFam" id="3.30.1390.10:FF:000002">
    <property type="entry name" value="ATP-dependent Clp protease adapter protein ClpS"/>
    <property type="match status" value="1"/>
</dbReference>
<dbReference type="Gene3D" id="3.30.1390.10">
    <property type="match status" value="1"/>
</dbReference>
<dbReference type="HAMAP" id="MF_00302">
    <property type="entry name" value="ClpS"/>
    <property type="match status" value="1"/>
</dbReference>
<dbReference type="InterPro" id="IPR022935">
    <property type="entry name" value="ClpS"/>
</dbReference>
<dbReference type="InterPro" id="IPR003769">
    <property type="entry name" value="ClpS_core"/>
</dbReference>
<dbReference type="InterPro" id="IPR014719">
    <property type="entry name" value="Ribosomal_bL12_C/ClpS-like"/>
</dbReference>
<dbReference type="NCBIfam" id="NF000670">
    <property type="entry name" value="PRK00033.1-3"/>
    <property type="match status" value="1"/>
</dbReference>
<dbReference type="NCBIfam" id="NF000672">
    <property type="entry name" value="PRK00033.1-5"/>
    <property type="match status" value="1"/>
</dbReference>
<dbReference type="PANTHER" id="PTHR33473:SF19">
    <property type="entry name" value="ATP-DEPENDENT CLP PROTEASE ADAPTER PROTEIN CLPS"/>
    <property type="match status" value="1"/>
</dbReference>
<dbReference type="PANTHER" id="PTHR33473">
    <property type="entry name" value="ATP-DEPENDENT CLP PROTEASE ADAPTER PROTEIN CLPS1, CHLOROPLASTIC"/>
    <property type="match status" value="1"/>
</dbReference>
<dbReference type="Pfam" id="PF02617">
    <property type="entry name" value="ClpS"/>
    <property type="match status" value="1"/>
</dbReference>
<dbReference type="SUPFAM" id="SSF54736">
    <property type="entry name" value="ClpS-like"/>
    <property type="match status" value="1"/>
</dbReference>
<protein>
    <recommendedName>
        <fullName evidence="1">ATP-dependent Clp protease adapter protein ClpS</fullName>
    </recommendedName>
</protein>
<sequence>MGKTNDWLDFDQLAEEKVRDALKPPSMYKVILVNDDYTPMEFVIDVLQKFFSYDVERATQLMLAVHYQGKAICGVFTAEVAETKVAMVNKYARENEHPLLCTLEKA</sequence>
<gene>
    <name evidence="1" type="primary">clpS</name>
    <name type="ordered locus">ECH74115_1042</name>
</gene>
<feature type="chain" id="PRO_1000115455" description="ATP-dependent Clp protease adapter protein ClpS">
    <location>
        <begin position="1"/>
        <end position="106"/>
    </location>
</feature>
<proteinExistence type="inferred from homology"/>